<reference key="1">
    <citation type="journal article" date="2002" name="Proc. Natl. Acad. Sci. U.S.A.">
        <title>Conservation of a portion of the S. cerevisiae Ure2p prion domain that interacts with the full-length protein.</title>
        <authorList>
            <person name="Edskes H.K."/>
            <person name="Wickner R.B."/>
        </authorList>
    </citation>
    <scope>NUCLEOTIDE SEQUENCE [GENOMIC DNA]</scope>
    <source>
        <strain>YJM 498</strain>
    </source>
</reference>
<reference key="2">
    <citation type="submission" date="2000-04" db="EMBL/GenBank/DDBJ databases">
        <title>Prion characteristics of the URE2 protein of various yeast species.</title>
        <authorList>
            <person name="Fernandez-Bellot E."/>
            <person name="Baudin-Baillieu A."/>
            <person name="Cullin C."/>
        </authorList>
    </citation>
    <scope>NUCLEOTIDE SEQUENCE [GENOMIC DNA]</scope>
</reference>
<comment type="function">
    <text evidence="1">Plays an important role in the cellular response to the nitrogen source. URE2 gene plays a major part in the repression of GLN1 and GDH2 genes by glutamine, and is required for the inactivation of glutamine synthetase. URE2 gene product may catalytically inactivate GLN3 in response to an increase in the intracellular concentration of glutamine (By similarity).</text>
</comment>
<comment type="subunit">
    <text evidence="1">Homodimer.</text>
</comment>
<comment type="similarity">
    <text evidence="3">Belongs to the GST superfamily.</text>
</comment>
<accession>Q7LLZ8</accession>
<accession>Q96X44</accession>
<gene>
    <name type="primary">URE2</name>
</gene>
<sequence>MMNNNGNQVSNLSNALRQVNIGNRNSNTTTDQSNINFEFSAGVNNNNNNSSSSNNNNNNNNNAQNNNSGRNGSQSNDNGNNIKDTLEQHRQQQQAFSDMSHVEYSRITKFFQEQPLEGYTLFSHRSAPNGFKVAIVLSELGFHYNTIFLDFNLGEHRAPEFVSVNPNARVPALIDHGMDNLSIWESGAILLHLVNKYYKETGNPLLWSDDLADQSQINAWLFFQTSGHAPMIGQALHFRYFHSQKIASAVERYTDEVRRVYGVVEMALAERREALVMELDTENAAAYSAGTTPMSQSRFFDYPVWLVGDKLTIADLAFVPWNNVVDRIGINIKIEFPEVYKWTKHMMRRPAVIKALRGE</sequence>
<name>URE2_SACPA</name>
<evidence type="ECO:0000250" key="1"/>
<evidence type="ECO:0000256" key="2">
    <source>
        <dbReference type="SAM" id="MobiDB-lite"/>
    </source>
</evidence>
<evidence type="ECO:0000305" key="3"/>
<dbReference type="EMBL" id="AF525165">
    <property type="protein sequence ID" value="AAM91938.1"/>
    <property type="molecule type" value="Genomic_DNA"/>
</dbReference>
<dbReference type="EMBL" id="AF260775">
    <property type="protein sequence ID" value="AAK51641.1"/>
    <property type="molecule type" value="Genomic_DNA"/>
</dbReference>
<dbReference type="BMRB" id="Q7LLZ8"/>
<dbReference type="SMR" id="Q7LLZ8"/>
<dbReference type="VEuPathDB" id="FungiDB:SPAR_N00980"/>
<dbReference type="OrthoDB" id="422574at2759"/>
<dbReference type="GO" id="GO:0003714">
    <property type="term" value="F:transcription corepressor activity"/>
    <property type="evidence" value="ECO:0007669"/>
    <property type="project" value="InterPro"/>
</dbReference>
<dbReference type="GO" id="GO:0042128">
    <property type="term" value="P:nitrate assimilation"/>
    <property type="evidence" value="ECO:0007669"/>
    <property type="project" value="UniProtKB-KW"/>
</dbReference>
<dbReference type="GO" id="GO:0006808">
    <property type="term" value="P:regulation of nitrogen utilization"/>
    <property type="evidence" value="ECO:0007669"/>
    <property type="project" value="InterPro"/>
</dbReference>
<dbReference type="CDD" id="cd10293">
    <property type="entry name" value="GST_C_Ure2p"/>
    <property type="match status" value="1"/>
</dbReference>
<dbReference type="CDD" id="cd03048">
    <property type="entry name" value="GST_N_Ure2p_like"/>
    <property type="match status" value="1"/>
</dbReference>
<dbReference type="FunFam" id="3.40.30.10:FF:000222">
    <property type="entry name" value="Protein URE2"/>
    <property type="match status" value="1"/>
</dbReference>
<dbReference type="FunFam" id="1.20.1050.10:FF:000034">
    <property type="entry name" value="Transcriptional regulator URE2"/>
    <property type="match status" value="1"/>
</dbReference>
<dbReference type="Gene3D" id="1.20.1050.10">
    <property type="match status" value="1"/>
</dbReference>
<dbReference type="Gene3D" id="3.40.30.10">
    <property type="entry name" value="Glutaredoxin"/>
    <property type="match status" value="1"/>
</dbReference>
<dbReference type="InterPro" id="IPR010987">
    <property type="entry name" value="Glutathione-S-Trfase_C-like"/>
</dbReference>
<dbReference type="InterPro" id="IPR036282">
    <property type="entry name" value="Glutathione-S-Trfase_C_sf"/>
</dbReference>
<dbReference type="InterPro" id="IPR040079">
    <property type="entry name" value="Glutathione_S-Trfase"/>
</dbReference>
<dbReference type="InterPro" id="IPR004045">
    <property type="entry name" value="Glutathione_S-Trfase_N"/>
</dbReference>
<dbReference type="InterPro" id="IPR004046">
    <property type="entry name" value="GST_C"/>
</dbReference>
<dbReference type="InterPro" id="IPR036249">
    <property type="entry name" value="Thioredoxin-like_sf"/>
</dbReference>
<dbReference type="InterPro" id="IPR017298">
    <property type="entry name" value="Ure2"/>
</dbReference>
<dbReference type="PANTHER" id="PTHR44051">
    <property type="entry name" value="GLUTATHIONE S-TRANSFERASE-RELATED"/>
    <property type="match status" value="1"/>
</dbReference>
<dbReference type="PANTHER" id="PTHR44051:SF3">
    <property type="entry name" value="TRANSCRIPTIONAL REGULATOR URE2"/>
    <property type="match status" value="1"/>
</dbReference>
<dbReference type="Pfam" id="PF00043">
    <property type="entry name" value="GST_C"/>
    <property type="match status" value="1"/>
</dbReference>
<dbReference type="Pfam" id="PF02798">
    <property type="entry name" value="GST_N"/>
    <property type="match status" value="1"/>
</dbReference>
<dbReference type="PIRSF" id="PIRSF037861">
    <property type="entry name" value="Prion_URE2"/>
    <property type="match status" value="1"/>
</dbReference>
<dbReference type="SFLD" id="SFLDS00019">
    <property type="entry name" value="Glutathione_Transferase_(cytos"/>
    <property type="match status" value="1"/>
</dbReference>
<dbReference type="SFLD" id="SFLDG00358">
    <property type="entry name" value="Main_(cytGST)"/>
    <property type="match status" value="1"/>
</dbReference>
<dbReference type="SUPFAM" id="SSF47616">
    <property type="entry name" value="GST C-terminal domain-like"/>
    <property type="match status" value="1"/>
</dbReference>
<dbReference type="SUPFAM" id="SSF52833">
    <property type="entry name" value="Thioredoxin-like"/>
    <property type="match status" value="1"/>
</dbReference>
<dbReference type="PROSITE" id="PS50405">
    <property type="entry name" value="GST_CTER"/>
    <property type="match status" value="1"/>
</dbReference>
<dbReference type="PROSITE" id="PS50404">
    <property type="entry name" value="GST_NTER"/>
    <property type="match status" value="1"/>
</dbReference>
<keyword id="KW-0534">Nitrate assimilation</keyword>
<feature type="chain" id="PRO_0000186012" description="Protein URE2">
    <location>
        <begin position="1"/>
        <end position="359"/>
    </location>
</feature>
<feature type="domain" description="GST N-terminal">
    <location>
        <begin position="117"/>
        <end position="201"/>
    </location>
</feature>
<feature type="domain" description="GST C-terminal">
    <location>
        <begin position="210"/>
        <end position="359"/>
    </location>
</feature>
<feature type="region of interest" description="Disordered" evidence="2">
    <location>
        <begin position="39"/>
        <end position="82"/>
    </location>
</feature>
<feature type="compositionally biased region" description="Low complexity" evidence="2">
    <location>
        <begin position="44"/>
        <end position="81"/>
    </location>
</feature>
<organism>
    <name type="scientific">Saccharomyces paradoxus</name>
    <name type="common">Yeast</name>
    <name type="synonym">Saccharomyces douglasii</name>
    <dbReference type="NCBI Taxonomy" id="27291"/>
    <lineage>
        <taxon>Eukaryota</taxon>
        <taxon>Fungi</taxon>
        <taxon>Dikarya</taxon>
        <taxon>Ascomycota</taxon>
        <taxon>Saccharomycotina</taxon>
        <taxon>Saccharomycetes</taxon>
        <taxon>Saccharomycetales</taxon>
        <taxon>Saccharomycetaceae</taxon>
        <taxon>Saccharomyces</taxon>
    </lineage>
</organism>
<proteinExistence type="inferred from homology"/>
<protein>
    <recommendedName>
        <fullName>Protein URE2</fullName>
    </recommendedName>
</protein>